<name>PRIN2_MAIZE</name>
<sequence>MATRAWVAAAVALNPQLLPLRSCSPTKSVSPAQRSASMGLRLRSGRPCLGKFVCRRAKNAGYEDYKFPDPIPEFAEQETSKFREHMAWRLEQKKEDYFGDHVEEIVDVCTEIMGTFLENDYRGPGTLLVHPFLDMKGEIKERGLPGAPQAARAAIAWAEKNVDKDWKAWTGEY</sequence>
<reference key="1">
    <citation type="journal article" date="2009" name="Science">
        <title>The B73 maize genome: complexity, diversity, and dynamics.</title>
        <authorList>
            <person name="Schnable P.S."/>
            <person name="Ware D."/>
            <person name="Fulton R.S."/>
            <person name="Stein J.C."/>
            <person name="Wei F."/>
            <person name="Pasternak S."/>
            <person name="Liang C."/>
            <person name="Zhang J."/>
            <person name="Fulton L."/>
            <person name="Graves T.A."/>
            <person name="Minx P."/>
            <person name="Reily A.D."/>
            <person name="Courtney L."/>
            <person name="Kruchowski S.S."/>
            <person name="Tomlinson C."/>
            <person name="Strong C."/>
            <person name="Delehaunty K."/>
            <person name="Fronick C."/>
            <person name="Courtney B."/>
            <person name="Rock S.M."/>
            <person name="Belter E."/>
            <person name="Du F."/>
            <person name="Kim K."/>
            <person name="Abbott R.M."/>
            <person name="Cotton M."/>
            <person name="Levy A."/>
            <person name="Marchetto P."/>
            <person name="Ochoa K."/>
            <person name="Jackson S.M."/>
            <person name="Gillam B."/>
            <person name="Chen W."/>
            <person name="Yan L."/>
            <person name="Higginbotham J."/>
            <person name="Cardenas M."/>
            <person name="Waligorski J."/>
            <person name="Applebaum E."/>
            <person name="Phelps L."/>
            <person name="Falcone J."/>
            <person name="Kanchi K."/>
            <person name="Thane T."/>
            <person name="Scimone A."/>
            <person name="Thane N."/>
            <person name="Henke J."/>
            <person name="Wang T."/>
            <person name="Ruppert J."/>
            <person name="Shah N."/>
            <person name="Rotter K."/>
            <person name="Hodges J."/>
            <person name="Ingenthron E."/>
            <person name="Cordes M."/>
            <person name="Kohlberg S."/>
            <person name="Sgro J."/>
            <person name="Delgado B."/>
            <person name="Mead K."/>
            <person name="Chinwalla A."/>
            <person name="Leonard S."/>
            <person name="Crouse K."/>
            <person name="Collura K."/>
            <person name="Kudrna D."/>
            <person name="Currie J."/>
            <person name="He R."/>
            <person name="Angelova A."/>
            <person name="Rajasekar S."/>
            <person name="Mueller T."/>
            <person name="Lomeli R."/>
            <person name="Scara G."/>
            <person name="Ko A."/>
            <person name="Delaney K."/>
            <person name="Wissotski M."/>
            <person name="Lopez G."/>
            <person name="Campos D."/>
            <person name="Braidotti M."/>
            <person name="Ashley E."/>
            <person name="Golser W."/>
            <person name="Kim H."/>
            <person name="Lee S."/>
            <person name="Lin J."/>
            <person name="Dujmic Z."/>
            <person name="Kim W."/>
            <person name="Talag J."/>
            <person name="Zuccolo A."/>
            <person name="Fan C."/>
            <person name="Sebastian A."/>
            <person name="Kramer M."/>
            <person name="Spiegel L."/>
            <person name="Nascimento L."/>
            <person name="Zutavern T."/>
            <person name="Miller B."/>
            <person name="Ambroise C."/>
            <person name="Muller S."/>
            <person name="Spooner W."/>
            <person name="Narechania A."/>
            <person name="Ren L."/>
            <person name="Wei S."/>
            <person name="Kumari S."/>
            <person name="Faga B."/>
            <person name="Levy M.J."/>
            <person name="McMahan L."/>
            <person name="Van Buren P."/>
            <person name="Vaughn M.W."/>
            <person name="Ying K."/>
            <person name="Yeh C.-T."/>
            <person name="Emrich S.J."/>
            <person name="Jia Y."/>
            <person name="Kalyanaraman A."/>
            <person name="Hsia A.-P."/>
            <person name="Barbazuk W.B."/>
            <person name="Baucom R.S."/>
            <person name="Brutnell T.P."/>
            <person name="Carpita N.C."/>
            <person name="Chaparro C."/>
            <person name="Chia J.-M."/>
            <person name="Deragon J.-M."/>
            <person name="Estill J.C."/>
            <person name="Fu Y."/>
            <person name="Jeddeloh J.A."/>
            <person name="Han Y."/>
            <person name="Lee H."/>
            <person name="Li P."/>
            <person name="Lisch D.R."/>
            <person name="Liu S."/>
            <person name="Liu Z."/>
            <person name="Nagel D.H."/>
            <person name="McCann M.C."/>
            <person name="SanMiguel P."/>
            <person name="Myers A.M."/>
            <person name="Nettleton D."/>
            <person name="Nguyen J."/>
            <person name="Penning B.W."/>
            <person name="Ponnala L."/>
            <person name="Schneider K.L."/>
            <person name="Schwartz D.C."/>
            <person name="Sharma A."/>
            <person name="Soderlund C."/>
            <person name="Springer N.M."/>
            <person name="Sun Q."/>
            <person name="Wang H."/>
            <person name="Waterman M."/>
            <person name="Westerman R."/>
            <person name="Wolfgruber T.K."/>
            <person name="Yang L."/>
            <person name="Yu Y."/>
            <person name="Zhang L."/>
            <person name="Zhou S."/>
            <person name="Zhu Q."/>
            <person name="Bennetzen J.L."/>
            <person name="Dawe R.K."/>
            <person name="Jiang J."/>
            <person name="Jiang N."/>
            <person name="Presting G.G."/>
            <person name="Wessler S.R."/>
            <person name="Aluru S."/>
            <person name="Martienssen R.A."/>
            <person name="Clifton S.W."/>
            <person name="McCombie W.R."/>
            <person name="Wing R.A."/>
            <person name="Wilson R.K."/>
        </authorList>
    </citation>
    <scope>NUCLEOTIDE SEQUENCE [LARGE SCALE GENOMIC DNA]</scope>
    <source>
        <strain>cv. B73</strain>
    </source>
</reference>
<reference key="2">
    <citation type="journal article" date="2009" name="Plant Mol. Biol.">
        <title>Insights into corn genes derived from large-scale cDNA sequencing.</title>
        <authorList>
            <person name="Alexandrov N.N."/>
            <person name="Brover V.V."/>
            <person name="Freidin S."/>
            <person name="Troukhan M.E."/>
            <person name="Tatarinova T.V."/>
            <person name="Zhang H."/>
            <person name="Swaller T.J."/>
            <person name="Lu Y.-P."/>
            <person name="Bouck J."/>
            <person name="Flavell R.B."/>
            <person name="Feldmann K.A."/>
        </authorList>
    </citation>
    <scope>NUCLEOTIDE SEQUENCE [LARGE SCALE MRNA]</scope>
</reference>
<reference key="3">
    <citation type="journal article" date="2012" name="Plant Physiol.">
        <title>Nucleoid-enriched proteomes in developing plastids and chloroplasts from maize leaves: a new conceptual framework for nucleoid functions.</title>
        <authorList>
            <person name="Majeran W."/>
            <person name="Friso G."/>
            <person name="Asakura Y."/>
            <person name="Qu X."/>
            <person name="Huang M."/>
            <person name="Ponnala L."/>
            <person name="Watkins K.P."/>
            <person name="Barkan A."/>
            <person name="van Wijk K.J."/>
        </authorList>
    </citation>
    <scope>SUBCELLULAR LOCATION</scope>
</reference>
<reference key="4">
    <citation type="journal article" date="2014" name="Plant Physiol.">
        <title>A major role for the plastid-encoded RNA polymerase complex in the expression of plastid transfer RNAs.</title>
        <authorList>
            <person name="Williams-Carrier R."/>
            <person name="Zoschke R."/>
            <person name="Belcher S."/>
            <person name="Pfalz J."/>
            <person name="Barkan A."/>
        </authorList>
    </citation>
    <scope>FUNCTION</scope>
    <scope>DISRUPTION PHENOTYPE</scope>
</reference>
<dbReference type="EMBL" id="CM007648">
    <property type="protein sequence ID" value="ONM21677.1"/>
    <property type="molecule type" value="Genomic_DNA"/>
</dbReference>
<dbReference type="EMBL" id="EU975942">
    <property type="protein sequence ID" value="ACG48060.1"/>
    <property type="molecule type" value="mRNA"/>
</dbReference>
<dbReference type="RefSeq" id="NP_001145504.1">
    <property type="nucleotide sequence ID" value="NM_001152032.1"/>
</dbReference>
<dbReference type="SMR" id="B6UFC7"/>
<dbReference type="FunCoup" id="B6UFC7">
    <property type="interactions" value="1736"/>
</dbReference>
<dbReference type="IntAct" id="B6UFC7">
    <property type="interactions" value="4"/>
</dbReference>
<dbReference type="STRING" id="4577.B6UFC7"/>
<dbReference type="PaxDb" id="4577-GRMZM2G119906_P01"/>
<dbReference type="EnsemblPlants" id="Zm00001eb098980_T002">
    <property type="protein sequence ID" value="Zm00001eb098980_P002"/>
    <property type="gene ID" value="Zm00001eb098980"/>
</dbReference>
<dbReference type="GeneID" id="100278908"/>
<dbReference type="Gramene" id="Zm00001eb098980_T002">
    <property type="protein sequence ID" value="Zm00001eb098980_P002"/>
    <property type="gene ID" value="Zm00001eb098980"/>
</dbReference>
<dbReference type="KEGG" id="zma:100278908"/>
<dbReference type="eggNOG" id="ENOG502S2MJ">
    <property type="taxonomic scope" value="Eukaryota"/>
</dbReference>
<dbReference type="HOGENOM" id="CLU_101160_1_0_1"/>
<dbReference type="InParanoid" id="B6UFC7"/>
<dbReference type="OMA" id="ITFICKA"/>
<dbReference type="OrthoDB" id="1924990at2759"/>
<dbReference type="Proteomes" id="UP000007305">
    <property type="component" value="Chromosome 2"/>
</dbReference>
<dbReference type="ExpressionAtlas" id="B6UFC7">
    <property type="expression patterns" value="baseline and differential"/>
</dbReference>
<dbReference type="GO" id="GO:0042644">
    <property type="term" value="C:chloroplast nucleoid"/>
    <property type="evidence" value="ECO:0000314"/>
    <property type="project" value="UniProtKB"/>
</dbReference>
<dbReference type="GO" id="GO:0003677">
    <property type="term" value="F:DNA binding"/>
    <property type="evidence" value="ECO:0007669"/>
    <property type="project" value="UniProtKB-KW"/>
</dbReference>
<dbReference type="GO" id="GO:0010468">
    <property type="term" value="P:regulation of gene expression"/>
    <property type="evidence" value="ECO:0000315"/>
    <property type="project" value="UniProtKB"/>
</dbReference>
<dbReference type="InterPro" id="IPR039349">
    <property type="entry name" value="PRIN2"/>
</dbReference>
<dbReference type="PANTHER" id="PTHR35987:SF2">
    <property type="entry name" value="PROTEIN PLASTID REDOX INSENSITIVE 2, CHLOROPLASTIC"/>
    <property type="match status" value="1"/>
</dbReference>
<dbReference type="PANTHER" id="PTHR35987">
    <property type="entry name" value="PROTEIN PLASTID REDOX INSENSITIVE 2, CHLOROPLASTIC-RELATED"/>
    <property type="match status" value="1"/>
</dbReference>
<accession>B6UFC7</accession>
<protein>
    <recommendedName>
        <fullName evidence="4">Protein PLASTID REDOX INSENSITIVE 2, chloroplastic</fullName>
        <shortName evidence="4">ZmPRIN2</shortName>
    </recommendedName>
</protein>
<comment type="function">
    <text evidence="3">Required for the activity of the plastid-encoded RNA polymerase (PEP) and full expression of genes transcribed by PEP.</text>
</comment>
<comment type="subcellular location">
    <subcellularLocation>
        <location evidence="2">Plastid</location>
        <location evidence="2">Chloroplast stroma</location>
        <location evidence="2">Chloroplast nucleoid</location>
    </subcellularLocation>
</comment>
<comment type="disruption phenotype">
    <text evidence="3">Pale yellow green leaf phenotype. Reduced levels of plastid ribosomes and defects in plastid mRNA metabolism.</text>
</comment>
<keyword id="KW-0150">Chloroplast</keyword>
<keyword id="KW-0238">DNA-binding</keyword>
<keyword id="KW-0934">Plastid</keyword>
<keyword id="KW-1185">Reference proteome</keyword>
<keyword id="KW-0804">Transcription</keyword>
<keyword id="KW-0805">Transcription regulation</keyword>
<keyword id="KW-0809">Transit peptide</keyword>
<evidence type="ECO:0000255" key="1"/>
<evidence type="ECO:0000269" key="2">
    <source>
    </source>
</evidence>
<evidence type="ECO:0000269" key="3">
    <source>
    </source>
</evidence>
<evidence type="ECO:0000303" key="4">
    <source>
    </source>
</evidence>
<evidence type="ECO:0000312" key="5">
    <source>
        <dbReference type="EMBL" id="ONM21677.1"/>
    </source>
</evidence>
<proteinExistence type="evidence at transcript level"/>
<organism>
    <name type="scientific">Zea mays</name>
    <name type="common">Maize</name>
    <dbReference type="NCBI Taxonomy" id="4577"/>
    <lineage>
        <taxon>Eukaryota</taxon>
        <taxon>Viridiplantae</taxon>
        <taxon>Streptophyta</taxon>
        <taxon>Embryophyta</taxon>
        <taxon>Tracheophyta</taxon>
        <taxon>Spermatophyta</taxon>
        <taxon>Magnoliopsida</taxon>
        <taxon>Liliopsida</taxon>
        <taxon>Poales</taxon>
        <taxon>Poaceae</taxon>
        <taxon>PACMAD clade</taxon>
        <taxon>Panicoideae</taxon>
        <taxon>Andropogonodae</taxon>
        <taxon>Andropogoneae</taxon>
        <taxon>Tripsacinae</taxon>
        <taxon>Zea</taxon>
    </lineage>
</organism>
<feature type="transit peptide" description="Chloroplast" evidence="1">
    <location>
        <begin position="1"/>
        <end position="55"/>
    </location>
</feature>
<feature type="chain" id="PRO_0000441842" description="Protein PLASTID REDOX INSENSITIVE 2, chloroplastic">
    <location>
        <begin position="56"/>
        <end position="173"/>
    </location>
</feature>
<gene>
    <name evidence="4" type="primary">PRIN2</name>
    <name evidence="5" type="ORF">ZEAMMB73_Zm00001d005694</name>
</gene>